<sequence>MCGIVGAVAQRDIAEILIEGLRRLEYRGYDSAGLAVVDSEGHLTRLRRVGKVHALSDAAEKQDLHGGTGIAHTRWATHGEPSEANAHPHVSDYISVVHNGIIENHEPLRELLISRGYRFSSETDTEVIAHLVHWEQQQGGSLLEVVKRVIPQLRGAYGTVVMDSRDPSRLIAARSGSPLVIGCGVGENFIASDQLALLPVTRRFIFLEEGDVVEVTRRSISIFDKQGNAIERPEIESQVQYDAGDKGIYRHYMQKEIYEQPMAIKNTLEGRLSHGMIDLSELGPKADALLAEVQHIQIIACGTSYNSGMVSRYWFESLAGVPCDVEIASEFRYRKSAVRPNSLLITLSQSGETADTLAALRLSKELGYLGSLAICNVAGSSLVRESDLALMTKAGTEIGVASTKAFTTQLTVLLMLVGRIGKLKGADASLEHDIVHALQALPARIEQMLSLDKTIEALAEGFSDKHHALFLGRGDQYPIAMEGALKLKEISYIHAEAYAAGELKHGPLALIDADMPVIVVAPNNELLEKLKSNIEEVRARGGLLYVFADQDAGFTDSEGMKIIQLPHVEEIIAPIFYTVPLQLLSYHVALIKGTDVDQPRNLAKSVTVE</sequence>
<dbReference type="EC" id="2.6.1.16" evidence="1"/>
<dbReference type="EMBL" id="BX936398">
    <property type="protein sequence ID" value="CAH23202.1"/>
    <property type="molecule type" value="Genomic_DNA"/>
</dbReference>
<dbReference type="RefSeq" id="WP_002215552.1">
    <property type="nucleotide sequence ID" value="NZ_CP009712.1"/>
</dbReference>
<dbReference type="SMR" id="Q663R1"/>
<dbReference type="GeneID" id="57974606"/>
<dbReference type="KEGG" id="ypo:BZ17_2611"/>
<dbReference type="KEGG" id="yps:YPTB3964"/>
<dbReference type="PATRIC" id="fig|273123.14.peg.2737"/>
<dbReference type="Proteomes" id="UP000001011">
    <property type="component" value="Chromosome"/>
</dbReference>
<dbReference type="GO" id="GO:0005829">
    <property type="term" value="C:cytosol"/>
    <property type="evidence" value="ECO:0007669"/>
    <property type="project" value="TreeGrafter"/>
</dbReference>
<dbReference type="GO" id="GO:0097367">
    <property type="term" value="F:carbohydrate derivative binding"/>
    <property type="evidence" value="ECO:0007669"/>
    <property type="project" value="InterPro"/>
</dbReference>
<dbReference type="GO" id="GO:0004360">
    <property type="term" value="F:glutamine-fructose-6-phosphate transaminase (isomerizing) activity"/>
    <property type="evidence" value="ECO:0007669"/>
    <property type="project" value="UniProtKB-UniRule"/>
</dbReference>
<dbReference type="GO" id="GO:0005975">
    <property type="term" value="P:carbohydrate metabolic process"/>
    <property type="evidence" value="ECO:0007669"/>
    <property type="project" value="UniProtKB-UniRule"/>
</dbReference>
<dbReference type="GO" id="GO:0006002">
    <property type="term" value="P:fructose 6-phosphate metabolic process"/>
    <property type="evidence" value="ECO:0007669"/>
    <property type="project" value="TreeGrafter"/>
</dbReference>
<dbReference type="GO" id="GO:0006487">
    <property type="term" value="P:protein N-linked glycosylation"/>
    <property type="evidence" value="ECO:0007669"/>
    <property type="project" value="TreeGrafter"/>
</dbReference>
<dbReference type="GO" id="GO:0006047">
    <property type="term" value="P:UDP-N-acetylglucosamine metabolic process"/>
    <property type="evidence" value="ECO:0007669"/>
    <property type="project" value="TreeGrafter"/>
</dbReference>
<dbReference type="CDD" id="cd00714">
    <property type="entry name" value="GFAT"/>
    <property type="match status" value="1"/>
</dbReference>
<dbReference type="CDD" id="cd05008">
    <property type="entry name" value="SIS_GlmS_GlmD_1"/>
    <property type="match status" value="1"/>
</dbReference>
<dbReference type="CDD" id="cd05009">
    <property type="entry name" value="SIS_GlmS_GlmD_2"/>
    <property type="match status" value="1"/>
</dbReference>
<dbReference type="FunFam" id="3.40.50.10490:FF:000001">
    <property type="entry name" value="Glutamine--fructose-6-phosphate aminotransferase [isomerizing]"/>
    <property type="match status" value="1"/>
</dbReference>
<dbReference type="FunFam" id="3.40.50.10490:FF:000002">
    <property type="entry name" value="Glutamine--fructose-6-phosphate aminotransferase [isomerizing]"/>
    <property type="match status" value="1"/>
</dbReference>
<dbReference type="FunFam" id="3.60.20.10:FF:000006">
    <property type="entry name" value="Glutamine--fructose-6-phosphate aminotransferase [isomerizing]"/>
    <property type="match status" value="1"/>
</dbReference>
<dbReference type="Gene3D" id="3.40.50.10490">
    <property type="entry name" value="Glucose-6-phosphate isomerase like protein, domain 1"/>
    <property type="match status" value="2"/>
</dbReference>
<dbReference type="Gene3D" id="3.60.20.10">
    <property type="entry name" value="Glutamine Phosphoribosylpyrophosphate, subunit 1, domain 1"/>
    <property type="match status" value="1"/>
</dbReference>
<dbReference type="HAMAP" id="MF_00164">
    <property type="entry name" value="GlmS"/>
    <property type="match status" value="1"/>
</dbReference>
<dbReference type="InterPro" id="IPR017932">
    <property type="entry name" value="GATase_2_dom"/>
</dbReference>
<dbReference type="InterPro" id="IPR005855">
    <property type="entry name" value="GFAT"/>
</dbReference>
<dbReference type="InterPro" id="IPR047084">
    <property type="entry name" value="GFAT_N"/>
</dbReference>
<dbReference type="InterPro" id="IPR035466">
    <property type="entry name" value="GlmS/AgaS_SIS"/>
</dbReference>
<dbReference type="InterPro" id="IPR035490">
    <property type="entry name" value="GlmS/FrlB_SIS"/>
</dbReference>
<dbReference type="InterPro" id="IPR029055">
    <property type="entry name" value="Ntn_hydrolases_N"/>
</dbReference>
<dbReference type="InterPro" id="IPR001347">
    <property type="entry name" value="SIS_dom"/>
</dbReference>
<dbReference type="InterPro" id="IPR046348">
    <property type="entry name" value="SIS_dom_sf"/>
</dbReference>
<dbReference type="NCBIfam" id="TIGR01135">
    <property type="entry name" value="glmS"/>
    <property type="match status" value="1"/>
</dbReference>
<dbReference type="NCBIfam" id="NF001484">
    <property type="entry name" value="PRK00331.1"/>
    <property type="match status" value="1"/>
</dbReference>
<dbReference type="PANTHER" id="PTHR10937">
    <property type="entry name" value="GLUCOSAMINE--FRUCTOSE-6-PHOSPHATE AMINOTRANSFERASE, ISOMERIZING"/>
    <property type="match status" value="1"/>
</dbReference>
<dbReference type="PANTHER" id="PTHR10937:SF0">
    <property type="entry name" value="GLUTAMINE--FRUCTOSE-6-PHOSPHATE TRANSAMINASE (ISOMERIZING)"/>
    <property type="match status" value="1"/>
</dbReference>
<dbReference type="Pfam" id="PF13522">
    <property type="entry name" value="GATase_6"/>
    <property type="match status" value="1"/>
</dbReference>
<dbReference type="Pfam" id="PF01380">
    <property type="entry name" value="SIS"/>
    <property type="match status" value="2"/>
</dbReference>
<dbReference type="SUPFAM" id="SSF56235">
    <property type="entry name" value="N-terminal nucleophile aminohydrolases (Ntn hydrolases)"/>
    <property type="match status" value="1"/>
</dbReference>
<dbReference type="SUPFAM" id="SSF53697">
    <property type="entry name" value="SIS domain"/>
    <property type="match status" value="1"/>
</dbReference>
<dbReference type="PROSITE" id="PS51278">
    <property type="entry name" value="GATASE_TYPE_2"/>
    <property type="match status" value="1"/>
</dbReference>
<dbReference type="PROSITE" id="PS51464">
    <property type="entry name" value="SIS"/>
    <property type="match status" value="2"/>
</dbReference>
<keyword id="KW-0032">Aminotransferase</keyword>
<keyword id="KW-0963">Cytoplasm</keyword>
<keyword id="KW-0315">Glutamine amidotransferase</keyword>
<keyword id="KW-0677">Repeat</keyword>
<keyword id="KW-0808">Transferase</keyword>
<accession>Q663R1</accession>
<proteinExistence type="inferred from homology"/>
<organism>
    <name type="scientific">Yersinia pseudotuberculosis serotype I (strain IP32953)</name>
    <dbReference type="NCBI Taxonomy" id="273123"/>
    <lineage>
        <taxon>Bacteria</taxon>
        <taxon>Pseudomonadati</taxon>
        <taxon>Pseudomonadota</taxon>
        <taxon>Gammaproteobacteria</taxon>
        <taxon>Enterobacterales</taxon>
        <taxon>Yersiniaceae</taxon>
        <taxon>Yersinia</taxon>
    </lineage>
</organism>
<name>GLMS_YERPS</name>
<feature type="initiator methionine" description="Removed" evidence="1">
    <location>
        <position position="1"/>
    </location>
</feature>
<feature type="chain" id="PRO_0000135419" description="Glutamine--fructose-6-phosphate aminotransferase [isomerizing]">
    <location>
        <begin position="2"/>
        <end position="609"/>
    </location>
</feature>
<feature type="domain" description="Glutamine amidotransferase type-2" evidence="1">
    <location>
        <begin position="2"/>
        <end position="218"/>
    </location>
</feature>
<feature type="domain" description="SIS 1" evidence="1">
    <location>
        <begin position="286"/>
        <end position="426"/>
    </location>
</feature>
<feature type="domain" description="SIS 2" evidence="1">
    <location>
        <begin position="458"/>
        <end position="599"/>
    </location>
</feature>
<feature type="active site" description="Nucleophile; for GATase activity" evidence="1">
    <location>
        <position position="2"/>
    </location>
</feature>
<feature type="active site" description="For Fru-6P isomerization activity" evidence="1">
    <location>
        <position position="604"/>
    </location>
</feature>
<evidence type="ECO:0000255" key="1">
    <source>
        <dbReference type="HAMAP-Rule" id="MF_00164"/>
    </source>
</evidence>
<gene>
    <name evidence="1" type="primary">glmS</name>
    <name type="ordered locus">YPTB3964</name>
</gene>
<reference key="1">
    <citation type="journal article" date="2004" name="Proc. Natl. Acad. Sci. U.S.A.">
        <title>Insights into the evolution of Yersinia pestis through whole-genome comparison with Yersinia pseudotuberculosis.</title>
        <authorList>
            <person name="Chain P.S.G."/>
            <person name="Carniel E."/>
            <person name="Larimer F.W."/>
            <person name="Lamerdin J."/>
            <person name="Stoutland P.O."/>
            <person name="Regala W.M."/>
            <person name="Georgescu A.M."/>
            <person name="Vergez L.M."/>
            <person name="Land M.L."/>
            <person name="Motin V.L."/>
            <person name="Brubaker R.R."/>
            <person name="Fowler J."/>
            <person name="Hinnebusch J."/>
            <person name="Marceau M."/>
            <person name="Medigue C."/>
            <person name="Simonet M."/>
            <person name="Chenal-Francisque V."/>
            <person name="Souza B."/>
            <person name="Dacheux D."/>
            <person name="Elliott J.M."/>
            <person name="Derbise A."/>
            <person name="Hauser L.J."/>
            <person name="Garcia E."/>
        </authorList>
    </citation>
    <scope>NUCLEOTIDE SEQUENCE [LARGE SCALE GENOMIC DNA]</scope>
    <source>
        <strain>IP32953</strain>
    </source>
</reference>
<comment type="function">
    <text evidence="1">Catalyzes the first step in hexosamine metabolism, converting fructose-6P into glucosamine-6P using glutamine as a nitrogen source.</text>
</comment>
<comment type="catalytic activity">
    <reaction evidence="1">
        <text>D-fructose 6-phosphate + L-glutamine = D-glucosamine 6-phosphate + L-glutamate</text>
        <dbReference type="Rhea" id="RHEA:13237"/>
        <dbReference type="ChEBI" id="CHEBI:29985"/>
        <dbReference type="ChEBI" id="CHEBI:58359"/>
        <dbReference type="ChEBI" id="CHEBI:58725"/>
        <dbReference type="ChEBI" id="CHEBI:61527"/>
        <dbReference type="EC" id="2.6.1.16"/>
    </reaction>
</comment>
<comment type="subunit">
    <text evidence="1">Homodimer.</text>
</comment>
<comment type="subcellular location">
    <subcellularLocation>
        <location evidence="1">Cytoplasm</location>
    </subcellularLocation>
</comment>
<protein>
    <recommendedName>
        <fullName evidence="1">Glutamine--fructose-6-phosphate aminotransferase [isomerizing]</fullName>
        <ecNumber evidence="1">2.6.1.16</ecNumber>
    </recommendedName>
    <alternativeName>
        <fullName evidence="1">D-fructose-6-phosphate amidotransferase</fullName>
    </alternativeName>
    <alternativeName>
        <fullName evidence="1">GFAT</fullName>
    </alternativeName>
    <alternativeName>
        <fullName evidence="1">Glucosamine-6-phosphate synthase</fullName>
    </alternativeName>
    <alternativeName>
        <fullName evidence="1">Hexosephosphate aminotransferase</fullName>
    </alternativeName>
    <alternativeName>
        <fullName evidence="1">L-glutamine--D-fructose-6-phosphate amidotransferase</fullName>
    </alternativeName>
</protein>